<feature type="chain" id="PRO_0000172347" description="Large ribosomal subunit protein bL32">
    <location>
        <begin position="1"/>
        <end position="49"/>
    </location>
</feature>
<sequence>MAVPKRRVSKTRAAKRRSHYKIALAKPIKDKDGSWKMPHHINKFTGSYK</sequence>
<evidence type="ECO:0000255" key="1">
    <source>
        <dbReference type="HAMAP-Rule" id="MF_00340"/>
    </source>
</evidence>
<evidence type="ECO:0000305" key="2"/>
<name>RL32_HELHP</name>
<gene>
    <name evidence="1" type="primary">rpmF</name>
    <name type="ordered locus">HH_0679</name>
</gene>
<reference key="1">
    <citation type="journal article" date="2003" name="Proc. Natl. Acad. Sci. U.S.A.">
        <title>The complete genome sequence of the carcinogenic bacterium Helicobacter hepaticus.</title>
        <authorList>
            <person name="Suerbaum S."/>
            <person name="Josenhans C."/>
            <person name="Sterzenbach T."/>
            <person name="Drescher B."/>
            <person name="Brandt P."/>
            <person name="Bell M."/>
            <person name="Droege M."/>
            <person name="Fartmann B."/>
            <person name="Fischer H.-P."/>
            <person name="Ge Z."/>
            <person name="Hoerster A."/>
            <person name="Holland R."/>
            <person name="Klein K."/>
            <person name="Koenig J."/>
            <person name="Macko L."/>
            <person name="Mendz G.L."/>
            <person name="Nyakatura G."/>
            <person name="Schauer D.B."/>
            <person name="Shen Z."/>
            <person name="Weber J."/>
            <person name="Frosch M."/>
            <person name="Fox J.G."/>
        </authorList>
    </citation>
    <scope>NUCLEOTIDE SEQUENCE [LARGE SCALE GENOMIC DNA]</scope>
    <source>
        <strain>ATCC 51449 / 3B1</strain>
    </source>
</reference>
<accession>Q7VIC7</accession>
<organism>
    <name type="scientific">Helicobacter hepaticus (strain ATCC 51449 / 3B1)</name>
    <dbReference type="NCBI Taxonomy" id="235279"/>
    <lineage>
        <taxon>Bacteria</taxon>
        <taxon>Pseudomonadati</taxon>
        <taxon>Campylobacterota</taxon>
        <taxon>Epsilonproteobacteria</taxon>
        <taxon>Campylobacterales</taxon>
        <taxon>Helicobacteraceae</taxon>
        <taxon>Helicobacter</taxon>
    </lineage>
</organism>
<proteinExistence type="inferred from homology"/>
<dbReference type="EMBL" id="AE017125">
    <property type="protein sequence ID" value="AAP77276.1"/>
    <property type="molecule type" value="Genomic_DNA"/>
</dbReference>
<dbReference type="RefSeq" id="WP_011115521.1">
    <property type="nucleotide sequence ID" value="NC_004917.1"/>
</dbReference>
<dbReference type="SMR" id="Q7VIC7"/>
<dbReference type="STRING" id="235279.HH_0679"/>
<dbReference type="KEGG" id="hhe:HH_0679"/>
<dbReference type="eggNOG" id="COG0333">
    <property type="taxonomic scope" value="Bacteria"/>
</dbReference>
<dbReference type="HOGENOM" id="CLU_129084_1_2_7"/>
<dbReference type="OrthoDB" id="9801927at2"/>
<dbReference type="Proteomes" id="UP000002495">
    <property type="component" value="Chromosome"/>
</dbReference>
<dbReference type="GO" id="GO:0015934">
    <property type="term" value="C:large ribosomal subunit"/>
    <property type="evidence" value="ECO:0007669"/>
    <property type="project" value="InterPro"/>
</dbReference>
<dbReference type="GO" id="GO:0003735">
    <property type="term" value="F:structural constituent of ribosome"/>
    <property type="evidence" value="ECO:0007669"/>
    <property type="project" value="InterPro"/>
</dbReference>
<dbReference type="GO" id="GO:0006412">
    <property type="term" value="P:translation"/>
    <property type="evidence" value="ECO:0007669"/>
    <property type="project" value="UniProtKB-UniRule"/>
</dbReference>
<dbReference type="HAMAP" id="MF_00340">
    <property type="entry name" value="Ribosomal_bL32"/>
    <property type="match status" value="1"/>
</dbReference>
<dbReference type="InterPro" id="IPR002677">
    <property type="entry name" value="Ribosomal_bL32"/>
</dbReference>
<dbReference type="InterPro" id="IPR044957">
    <property type="entry name" value="Ribosomal_bL32_bact"/>
</dbReference>
<dbReference type="InterPro" id="IPR011332">
    <property type="entry name" value="Ribosomal_zn-bd"/>
</dbReference>
<dbReference type="NCBIfam" id="TIGR01031">
    <property type="entry name" value="rpmF_bact"/>
    <property type="match status" value="1"/>
</dbReference>
<dbReference type="PANTHER" id="PTHR35534">
    <property type="entry name" value="50S RIBOSOMAL PROTEIN L32"/>
    <property type="match status" value="1"/>
</dbReference>
<dbReference type="PANTHER" id="PTHR35534:SF1">
    <property type="entry name" value="LARGE RIBOSOMAL SUBUNIT PROTEIN BL32"/>
    <property type="match status" value="1"/>
</dbReference>
<dbReference type="Pfam" id="PF01783">
    <property type="entry name" value="Ribosomal_L32p"/>
    <property type="match status" value="1"/>
</dbReference>
<dbReference type="SUPFAM" id="SSF57829">
    <property type="entry name" value="Zn-binding ribosomal proteins"/>
    <property type="match status" value="1"/>
</dbReference>
<keyword id="KW-1185">Reference proteome</keyword>
<keyword id="KW-0687">Ribonucleoprotein</keyword>
<keyword id="KW-0689">Ribosomal protein</keyword>
<comment type="similarity">
    <text evidence="1">Belongs to the bacterial ribosomal protein bL32 family.</text>
</comment>
<protein>
    <recommendedName>
        <fullName evidence="1">Large ribosomal subunit protein bL32</fullName>
    </recommendedName>
    <alternativeName>
        <fullName evidence="2">50S ribosomal protein L32</fullName>
    </alternativeName>
</protein>